<keyword id="KW-0106">Calcium</keyword>
<keyword id="KW-0479">Metal-binding</keyword>
<keyword id="KW-0514">Muscle protein</keyword>
<keyword id="KW-1185">Reference proteome</keyword>
<keyword id="KW-0677">Repeat</keyword>
<organism>
    <name type="scientific">Xenopus laevis</name>
    <name type="common">African clawed frog</name>
    <dbReference type="NCBI Taxonomy" id="8355"/>
    <lineage>
        <taxon>Eukaryota</taxon>
        <taxon>Metazoa</taxon>
        <taxon>Chordata</taxon>
        <taxon>Craniata</taxon>
        <taxon>Vertebrata</taxon>
        <taxon>Euteleostomi</taxon>
        <taxon>Amphibia</taxon>
        <taxon>Batrachia</taxon>
        <taxon>Anura</taxon>
        <taxon>Pipoidea</taxon>
        <taxon>Pipidae</taxon>
        <taxon>Xenopodinae</taxon>
        <taxon>Xenopus</taxon>
        <taxon>Xenopus</taxon>
    </lineage>
</organism>
<accession>P05940</accession>
<sequence length="109" mass="11623">MAFGGILSEADISAALQNCQAADSFNFKTFFAQSGLSSKSADDVKNVFAILDQDRSGFIEEEELKLFLQNFSASARALTDAETKAFLAAGDSDGDGKIGVEEFQSLVKP</sequence>
<feature type="initiator methionine" description="Removed" evidence="1">
    <location>
        <position position="1"/>
    </location>
</feature>
<feature type="chain" id="PRO_0000073623" description="Parvalbumin beta">
    <location>
        <begin position="2"/>
        <end position="109"/>
    </location>
</feature>
<feature type="domain" description="EF-hand 1" evidence="3">
    <location>
        <begin position="39"/>
        <end position="74"/>
    </location>
</feature>
<feature type="domain" description="EF-hand 2" evidence="3">
    <location>
        <begin position="78"/>
        <end position="109"/>
    </location>
</feature>
<feature type="binding site" evidence="2 3">
    <location>
        <position position="52"/>
    </location>
    <ligand>
        <name>Ca(2+)</name>
        <dbReference type="ChEBI" id="CHEBI:29108"/>
        <label>1</label>
    </ligand>
</feature>
<feature type="binding site" evidence="2 3">
    <location>
        <position position="54"/>
    </location>
    <ligand>
        <name>Ca(2+)</name>
        <dbReference type="ChEBI" id="CHEBI:29108"/>
        <label>1</label>
    </ligand>
</feature>
<feature type="binding site" evidence="2 3">
    <location>
        <position position="56"/>
    </location>
    <ligand>
        <name>Ca(2+)</name>
        <dbReference type="ChEBI" id="CHEBI:29108"/>
        <label>1</label>
    </ligand>
</feature>
<feature type="binding site" evidence="2">
    <location>
        <position position="58"/>
    </location>
    <ligand>
        <name>Ca(2+)</name>
        <dbReference type="ChEBI" id="CHEBI:29108"/>
        <label>1</label>
    </ligand>
</feature>
<feature type="binding site" evidence="2">
    <location>
        <position position="60"/>
    </location>
    <ligand>
        <name>Ca(2+)</name>
        <dbReference type="ChEBI" id="CHEBI:29108"/>
        <label>1</label>
    </ligand>
</feature>
<feature type="binding site" evidence="2 3">
    <location>
        <position position="63"/>
    </location>
    <ligand>
        <name>Ca(2+)</name>
        <dbReference type="ChEBI" id="CHEBI:29108"/>
        <label>1</label>
    </ligand>
</feature>
<feature type="binding site" evidence="2 3">
    <location>
        <position position="91"/>
    </location>
    <ligand>
        <name>Ca(2+)</name>
        <dbReference type="ChEBI" id="CHEBI:29108"/>
        <label>2</label>
    </ligand>
</feature>
<feature type="binding site" evidence="2 3">
    <location>
        <position position="93"/>
    </location>
    <ligand>
        <name>Ca(2+)</name>
        <dbReference type="ChEBI" id="CHEBI:29108"/>
        <label>2</label>
    </ligand>
</feature>
<feature type="binding site" evidence="2 3">
    <location>
        <position position="95"/>
    </location>
    <ligand>
        <name>Ca(2+)</name>
        <dbReference type="ChEBI" id="CHEBI:29108"/>
        <label>2</label>
    </ligand>
</feature>
<feature type="binding site" evidence="3">
    <location>
        <position position="97"/>
    </location>
    <ligand>
        <name>Ca(2+)</name>
        <dbReference type="ChEBI" id="CHEBI:29108"/>
        <label>2</label>
    </ligand>
</feature>
<feature type="binding site" evidence="2 3">
    <location>
        <position position="102"/>
    </location>
    <ligand>
        <name>Ca(2+)</name>
        <dbReference type="ChEBI" id="CHEBI:29108"/>
        <label>2</label>
    </ligand>
</feature>
<name>PRVB_XENLA</name>
<proteinExistence type="inferred from homology"/>
<comment type="function">
    <text evidence="1">In muscle, parvalbumin is thought to be involved in relaxation after contraction. It binds two calcium ions (By similarity).</text>
</comment>
<comment type="similarity">
    <text evidence="4">Belongs to the parvalbumin family.</text>
</comment>
<comment type="sequence caution" evidence="4">
    <conflict type="erroneous initiation">
        <sequence resource="EMBL-CDS" id="AAA49925"/>
    </conflict>
    <text>Extended N-terminus.</text>
</comment>
<reference key="1">
    <citation type="journal article" date="1987" name="J. Cell Biol.">
        <title>Expression of the Ca2+-binding protein, parvalbumin, during embryonic development of the frog, Xenopus laevis.</title>
        <authorList>
            <person name="Kay B.K."/>
            <person name="Shah A.J."/>
            <person name="Halstead W.E."/>
        </authorList>
    </citation>
    <scope>NUCLEOTIDE SEQUENCE [MRNA]</scope>
</reference>
<protein>
    <recommendedName>
        <fullName>Parvalbumin beta</fullName>
    </recommendedName>
</protein>
<evidence type="ECO:0000250" key="1"/>
<evidence type="ECO:0000250" key="2">
    <source>
        <dbReference type="UniProtKB" id="P02621"/>
    </source>
</evidence>
<evidence type="ECO:0000255" key="3">
    <source>
        <dbReference type="PROSITE-ProRule" id="PRU00448"/>
    </source>
</evidence>
<evidence type="ECO:0000305" key="4"/>
<dbReference type="EMBL" id="M28644">
    <property type="protein sequence ID" value="AAA49925.1"/>
    <property type="status" value="ALT_INIT"/>
    <property type="molecule type" value="mRNA"/>
</dbReference>
<dbReference type="PIR" id="A27273">
    <property type="entry name" value="PVXLB"/>
</dbReference>
<dbReference type="SMR" id="P05940"/>
<dbReference type="AGR" id="Xenbase:XB-GENE-5763398"/>
<dbReference type="Xenbase" id="XB-GENE-5763398">
    <property type="gene designation" value="ocm4.5.L"/>
</dbReference>
<dbReference type="Proteomes" id="UP000186698">
    <property type="component" value="Unplaced"/>
</dbReference>
<dbReference type="GO" id="GO:0005737">
    <property type="term" value="C:cytoplasm"/>
    <property type="evidence" value="ECO:0000318"/>
    <property type="project" value="GO_Central"/>
</dbReference>
<dbReference type="GO" id="GO:0005509">
    <property type="term" value="F:calcium ion binding"/>
    <property type="evidence" value="ECO:0000318"/>
    <property type="project" value="GO_Central"/>
</dbReference>
<dbReference type="CDD" id="cd16255">
    <property type="entry name" value="EFh_parvalbumin_beta"/>
    <property type="match status" value="1"/>
</dbReference>
<dbReference type="FunFam" id="1.10.238.10:FF:000060">
    <property type="entry name" value="Parvalbumin, thymic"/>
    <property type="match status" value="1"/>
</dbReference>
<dbReference type="Gene3D" id="1.10.238.10">
    <property type="entry name" value="EF-hand"/>
    <property type="match status" value="1"/>
</dbReference>
<dbReference type="InterPro" id="IPR011992">
    <property type="entry name" value="EF-hand-dom_pair"/>
</dbReference>
<dbReference type="InterPro" id="IPR018247">
    <property type="entry name" value="EF_Hand_1_Ca_BS"/>
</dbReference>
<dbReference type="InterPro" id="IPR002048">
    <property type="entry name" value="EF_hand_dom"/>
</dbReference>
<dbReference type="InterPro" id="IPR008080">
    <property type="entry name" value="Parvalbumin"/>
</dbReference>
<dbReference type="PANTHER" id="PTHR11653">
    <property type="entry name" value="PARVALBUMIN ALPHA"/>
    <property type="match status" value="1"/>
</dbReference>
<dbReference type="PANTHER" id="PTHR11653:SF24">
    <property type="entry name" value="PARVALBUMIN BETA"/>
    <property type="match status" value="1"/>
</dbReference>
<dbReference type="Pfam" id="PF13499">
    <property type="entry name" value="EF-hand_7"/>
    <property type="match status" value="1"/>
</dbReference>
<dbReference type="PRINTS" id="PR01697">
    <property type="entry name" value="PARVALBUMIN"/>
</dbReference>
<dbReference type="SMART" id="SM00054">
    <property type="entry name" value="EFh"/>
    <property type="match status" value="2"/>
</dbReference>
<dbReference type="SUPFAM" id="SSF47473">
    <property type="entry name" value="EF-hand"/>
    <property type="match status" value="1"/>
</dbReference>
<dbReference type="PROSITE" id="PS00018">
    <property type="entry name" value="EF_HAND_1"/>
    <property type="match status" value="2"/>
</dbReference>
<dbReference type="PROSITE" id="PS50222">
    <property type="entry name" value="EF_HAND_2"/>
    <property type="match status" value="2"/>
</dbReference>